<comment type="function">
    <text evidence="1">ATP-dependent serine protease that mediates the selective degradation of misfolded, unassembled or oxidatively damaged polypeptides as well as certain short-lived regulatory proteins in the mitochondrial matrix. May also have a chaperone function in the assembly of inner membrane protein complexes. Participates in the regulation of mitochondrial gene expression and in the maintenance of the integrity of the mitochondrial genome. Binds to mitochondrial DNA in a site-specific manner.</text>
</comment>
<comment type="catalytic activity">
    <reaction evidence="1">
        <text>Hydrolysis of proteins in presence of ATP.</text>
        <dbReference type="EC" id="3.4.21.53"/>
    </reaction>
</comment>
<comment type="subunit">
    <text evidence="1">Homohexamer or homoheptamer. Organized in a ring with a central cavity.</text>
</comment>
<comment type="subcellular location">
    <subcellularLocation>
        <location evidence="1">Mitochondrion matrix</location>
    </subcellularLocation>
</comment>
<comment type="similarity">
    <text evidence="1">Belongs to the peptidase S16 family.</text>
</comment>
<comment type="sequence caution" evidence="5">
    <conflict type="erroneous gene model prediction">
        <sequence resource="EMBL-CDS" id="CAP31724"/>
    </conflict>
</comment>
<sequence length="960" mass="106955">MYRAGALVLRSATLRRTRFLAAHQNFATISSQRSSVLLAKSLESSIGGAGNQKKFYSSKDHDDPIAVDDSLELYKDLGGMSPIQVPADMPNVPILAINRYPLFPGFIKKVDIVKDDNLKALIRRQLSLKQPYAGVFVKKDDENKEETIVSLSEVYPTGSFVQIIEVRDQGSVLELVLSAHRRIRVIEPIEDVVAPKTDTPLNGRRARGKRAGLPPTPPPTPPLSTPTSAPEASATSPEEKEEKKDPERKGIVMVRTENVVADPVPKNNETKATMMAIVQTIRDVVQFNQLFGQQINLLLHPSQNVIDNPVYLCDLVATLVQSAETKDLQEMMDETDVSKRLKIALLLIQKEKAVAKLKHDINKDVEKKVQDHHRKYLLNEQLKVIKKELGIEKDEKTTIIEKIDERMKTLAVPEYALKVINEEKTKLQFLDPHSSEFSVTRNYLEWLTSVPWGLTSPENRRLSHAKKALDEGHYGMKDVKERIMEFIAVNLLRKSVGGKILCFHGPPGVGKTSIAKSIANALNREYFRFSVGGMTDVAEIKGHRRTYVGAMPGKMIQCMKKVKTENPLVLIDEVDKIGGAGFHGDPASALLELLDPEQNANFNDHFLDVPVDLSRVLFICTANEISKIPGPLRDRMEMIDVSGYLAEEKVAIAHQHLIPQLRKETSLSADQLNIEDSALEELIKHYCRESGVRNLQQHIERIFRKAALQIAEQQPEDEQPAATTAISENSDAEPVSTPSDPPTFTPEKINISTENLQKFVGRPKFTSDRMYEVTPPGVIMGLAWTAMGGSALYIETVLKRPVDVTSDKDGSIETTGNLGDVMKESVRTALTVSKGILAREQPDNKFFDKSHIHIHVPEGATPKDGPSAGVTLVSSLLSLALNRPVVQDMAMTGEISLTGKVLPVGGIREKIIAARRVGAKRVFLPAENRRDFDDLPEFMKSELDIRFVSHYDELYEHLFQ</sequence>
<feature type="transit peptide" description="Mitochondrion" evidence="1">
    <location>
        <begin position="1"/>
        <end position="56"/>
    </location>
</feature>
<feature type="chain" id="PRO_0000395763" description="Lon protease homolog, mitochondrial">
    <location>
        <begin position="57"/>
        <end position="960"/>
    </location>
</feature>
<feature type="domain" description="Lon N-terminal" evidence="3">
    <location>
        <begin position="92"/>
        <end position="352"/>
    </location>
</feature>
<feature type="domain" description="Lon proteolytic" evidence="2">
    <location>
        <begin position="773"/>
        <end position="960"/>
    </location>
</feature>
<feature type="region of interest" description="Disordered" evidence="4">
    <location>
        <begin position="195"/>
        <end position="250"/>
    </location>
</feature>
<feature type="region of interest" description="Disordered" evidence="4">
    <location>
        <begin position="712"/>
        <end position="748"/>
    </location>
</feature>
<feature type="compositionally biased region" description="Pro residues" evidence="4">
    <location>
        <begin position="214"/>
        <end position="224"/>
    </location>
</feature>
<feature type="compositionally biased region" description="Low complexity" evidence="4">
    <location>
        <begin position="225"/>
        <end position="236"/>
    </location>
</feature>
<feature type="compositionally biased region" description="Basic and acidic residues" evidence="4">
    <location>
        <begin position="237"/>
        <end position="250"/>
    </location>
</feature>
<feature type="active site" evidence="1">
    <location>
        <position position="867"/>
    </location>
</feature>
<feature type="active site" evidence="1">
    <location>
        <position position="910"/>
    </location>
</feature>
<feature type="binding site" evidence="1">
    <location>
        <begin position="505"/>
        <end position="512"/>
    </location>
    <ligand>
        <name>ATP</name>
        <dbReference type="ChEBI" id="CHEBI:30616"/>
    </ligand>
</feature>
<proteinExistence type="inferred from homology"/>
<reference key="1">
    <citation type="journal article" date="2003" name="PLoS Biol.">
        <title>The genome sequence of Caenorhabditis briggsae: a platform for comparative genomics.</title>
        <authorList>
            <person name="Stein L.D."/>
            <person name="Bao Z."/>
            <person name="Blasiar D."/>
            <person name="Blumenthal T."/>
            <person name="Brent M.R."/>
            <person name="Chen N."/>
            <person name="Chinwalla A."/>
            <person name="Clarke L."/>
            <person name="Clee C."/>
            <person name="Coghlan A."/>
            <person name="Coulson A."/>
            <person name="D'Eustachio P."/>
            <person name="Fitch D.H.A."/>
            <person name="Fulton L.A."/>
            <person name="Fulton R.E."/>
            <person name="Griffiths-Jones S."/>
            <person name="Harris T.W."/>
            <person name="Hillier L.W."/>
            <person name="Kamath R."/>
            <person name="Kuwabara P.E."/>
            <person name="Mardis E.R."/>
            <person name="Marra M.A."/>
            <person name="Miner T.L."/>
            <person name="Minx P."/>
            <person name="Mullikin J.C."/>
            <person name="Plumb R.W."/>
            <person name="Rogers J."/>
            <person name="Schein J.E."/>
            <person name="Sohrmann M."/>
            <person name="Spieth J."/>
            <person name="Stajich J.E."/>
            <person name="Wei C."/>
            <person name="Willey D."/>
            <person name="Wilson R.K."/>
            <person name="Durbin R.M."/>
            <person name="Waterston R.H."/>
        </authorList>
    </citation>
    <scope>NUCLEOTIDE SEQUENCE [LARGE SCALE GENOMIC DNA]</scope>
    <source>
        <strain>AF16</strain>
    </source>
</reference>
<keyword id="KW-0067">ATP-binding</keyword>
<keyword id="KW-0238">DNA-binding</keyword>
<keyword id="KW-0378">Hydrolase</keyword>
<keyword id="KW-0496">Mitochondrion</keyword>
<keyword id="KW-0547">Nucleotide-binding</keyword>
<keyword id="KW-0645">Protease</keyword>
<keyword id="KW-1185">Reference proteome</keyword>
<keyword id="KW-0720">Serine protease</keyword>
<keyword id="KW-0809">Transit peptide</keyword>
<protein>
    <recommendedName>
        <fullName evidence="1">Lon protease homolog, mitochondrial</fullName>
        <ecNumber evidence="1">3.4.21.53</ecNumber>
    </recommendedName>
</protein>
<organism>
    <name type="scientific">Caenorhabditis briggsae</name>
    <dbReference type="NCBI Taxonomy" id="6238"/>
    <lineage>
        <taxon>Eukaryota</taxon>
        <taxon>Metazoa</taxon>
        <taxon>Ecdysozoa</taxon>
        <taxon>Nematoda</taxon>
        <taxon>Chromadorea</taxon>
        <taxon>Rhabditida</taxon>
        <taxon>Rhabditina</taxon>
        <taxon>Rhabditomorpha</taxon>
        <taxon>Rhabditoidea</taxon>
        <taxon>Rhabditidae</taxon>
        <taxon>Peloderinae</taxon>
        <taxon>Caenorhabditis</taxon>
    </lineage>
</organism>
<gene>
    <name evidence="6" type="primary">lonp-1</name>
    <name evidence="6" type="ORF">CBG12802</name>
</gene>
<name>LONM_CAEBR</name>
<evidence type="ECO:0000255" key="1">
    <source>
        <dbReference type="HAMAP-Rule" id="MF_03120"/>
    </source>
</evidence>
<evidence type="ECO:0000255" key="2">
    <source>
        <dbReference type="PROSITE-ProRule" id="PRU01122"/>
    </source>
</evidence>
<evidence type="ECO:0000255" key="3">
    <source>
        <dbReference type="PROSITE-ProRule" id="PRU01123"/>
    </source>
</evidence>
<evidence type="ECO:0000256" key="4">
    <source>
        <dbReference type="SAM" id="MobiDB-lite"/>
    </source>
</evidence>
<evidence type="ECO:0000305" key="5"/>
<evidence type="ECO:0000312" key="6">
    <source>
        <dbReference type="WormBase" id="CBG12802"/>
    </source>
</evidence>
<dbReference type="EC" id="3.4.21.53" evidence="1"/>
<dbReference type="EMBL" id="HE600940">
    <property type="protein sequence ID" value="CAP31724.2"/>
    <property type="status" value="ALT_SEQ"/>
    <property type="molecule type" value="Genomic_DNA"/>
</dbReference>
<dbReference type="RefSeq" id="XP_002640277.1">
    <property type="nucleotide sequence ID" value="XM_002640231.1"/>
</dbReference>
<dbReference type="SMR" id="A8XFM8"/>
<dbReference type="FunCoup" id="A8XFM8">
    <property type="interactions" value="1657"/>
</dbReference>
<dbReference type="STRING" id="6238.A8XFM8"/>
<dbReference type="WormBase" id="CBG12802">
    <property type="protein sequence ID" value="CBP42408"/>
    <property type="gene ID" value="WBGene00033694"/>
    <property type="gene designation" value="Cbr-lonp-1"/>
</dbReference>
<dbReference type="eggNOG" id="KOG2004">
    <property type="taxonomic scope" value="Eukaryota"/>
</dbReference>
<dbReference type="InParanoid" id="A8XFM8"/>
<dbReference type="Proteomes" id="UP000008549">
    <property type="component" value="Unassembled WGS sequence"/>
</dbReference>
<dbReference type="GO" id="GO:0005759">
    <property type="term" value="C:mitochondrial matrix"/>
    <property type="evidence" value="ECO:0000318"/>
    <property type="project" value="GO_Central"/>
</dbReference>
<dbReference type="GO" id="GO:0005524">
    <property type="term" value="F:ATP binding"/>
    <property type="evidence" value="ECO:0007669"/>
    <property type="project" value="UniProtKB-UniRule"/>
</dbReference>
<dbReference type="GO" id="GO:0016887">
    <property type="term" value="F:ATP hydrolysis activity"/>
    <property type="evidence" value="ECO:0007669"/>
    <property type="project" value="UniProtKB-UniRule"/>
</dbReference>
<dbReference type="GO" id="GO:0004176">
    <property type="term" value="F:ATP-dependent peptidase activity"/>
    <property type="evidence" value="ECO:0000318"/>
    <property type="project" value="GO_Central"/>
</dbReference>
<dbReference type="GO" id="GO:0043565">
    <property type="term" value="F:sequence-specific DNA binding"/>
    <property type="evidence" value="ECO:0007669"/>
    <property type="project" value="UniProtKB-UniRule"/>
</dbReference>
<dbReference type="GO" id="GO:0004252">
    <property type="term" value="F:serine-type endopeptidase activity"/>
    <property type="evidence" value="ECO:0007669"/>
    <property type="project" value="UniProtKB-UniRule"/>
</dbReference>
<dbReference type="GO" id="GO:0003697">
    <property type="term" value="F:single-stranded DNA binding"/>
    <property type="evidence" value="ECO:0000318"/>
    <property type="project" value="GO_Central"/>
</dbReference>
<dbReference type="GO" id="GO:0034599">
    <property type="term" value="P:cellular response to oxidative stress"/>
    <property type="evidence" value="ECO:0007669"/>
    <property type="project" value="UniProtKB-UniRule"/>
</dbReference>
<dbReference type="GO" id="GO:0051131">
    <property type="term" value="P:chaperone-mediated protein complex assembly"/>
    <property type="evidence" value="ECO:0000318"/>
    <property type="project" value="GO_Central"/>
</dbReference>
<dbReference type="GO" id="GO:0007005">
    <property type="term" value="P:mitochondrion organization"/>
    <property type="evidence" value="ECO:0000318"/>
    <property type="project" value="GO_Central"/>
</dbReference>
<dbReference type="GO" id="GO:0070407">
    <property type="term" value="P:oxidation-dependent protein catabolic process"/>
    <property type="evidence" value="ECO:0007669"/>
    <property type="project" value="UniProtKB-UniRule"/>
</dbReference>
<dbReference type="GO" id="GO:0006515">
    <property type="term" value="P:protein quality control for misfolded or incompletely synthesized proteins"/>
    <property type="evidence" value="ECO:0000318"/>
    <property type="project" value="GO_Central"/>
</dbReference>
<dbReference type="CDD" id="cd19500">
    <property type="entry name" value="RecA-like_Lon"/>
    <property type="match status" value="1"/>
</dbReference>
<dbReference type="FunFam" id="3.40.50.300:FF:000021">
    <property type="entry name" value="Lon protease homolog"/>
    <property type="match status" value="1"/>
</dbReference>
<dbReference type="FunFam" id="1.20.5.5270:FF:000001">
    <property type="entry name" value="Lon protease homolog, mitochondrial"/>
    <property type="match status" value="1"/>
</dbReference>
<dbReference type="FunFam" id="1.20.58.1480:FF:000002">
    <property type="entry name" value="Lon protease homolog, mitochondrial"/>
    <property type="match status" value="1"/>
</dbReference>
<dbReference type="FunFam" id="2.30.130.40:FF:000021">
    <property type="entry name" value="Lon protease homolog, mitochondrial"/>
    <property type="match status" value="1"/>
</dbReference>
<dbReference type="FunFam" id="3.30.230.10:FF:000015">
    <property type="entry name" value="Lon protease homolog, mitochondrial"/>
    <property type="match status" value="1"/>
</dbReference>
<dbReference type="Gene3D" id="1.10.8.60">
    <property type="match status" value="1"/>
</dbReference>
<dbReference type="Gene3D" id="1.20.5.5270">
    <property type="match status" value="1"/>
</dbReference>
<dbReference type="Gene3D" id="1.20.58.1480">
    <property type="match status" value="1"/>
</dbReference>
<dbReference type="Gene3D" id="3.30.230.10">
    <property type="match status" value="1"/>
</dbReference>
<dbReference type="Gene3D" id="2.30.130.40">
    <property type="entry name" value="LON domain-like"/>
    <property type="match status" value="1"/>
</dbReference>
<dbReference type="Gene3D" id="3.40.50.300">
    <property type="entry name" value="P-loop containing nucleotide triphosphate hydrolases"/>
    <property type="match status" value="1"/>
</dbReference>
<dbReference type="HAMAP" id="MF_03120">
    <property type="entry name" value="lonm_euk"/>
    <property type="match status" value="1"/>
</dbReference>
<dbReference type="InterPro" id="IPR003593">
    <property type="entry name" value="AAA+_ATPase"/>
</dbReference>
<dbReference type="InterPro" id="IPR003959">
    <property type="entry name" value="ATPase_AAA_core"/>
</dbReference>
<dbReference type="InterPro" id="IPR004815">
    <property type="entry name" value="Lon_bac/euk-typ"/>
</dbReference>
<dbReference type="InterPro" id="IPR054594">
    <property type="entry name" value="Lon_lid"/>
</dbReference>
<dbReference type="InterPro" id="IPR008269">
    <property type="entry name" value="Lon_proteolytic"/>
</dbReference>
<dbReference type="InterPro" id="IPR027065">
    <property type="entry name" value="Lon_Prtase"/>
</dbReference>
<dbReference type="InterPro" id="IPR003111">
    <property type="entry name" value="Lon_prtase_N"/>
</dbReference>
<dbReference type="InterPro" id="IPR046336">
    <property type="entry name" value="Lon_prtase_N_sf"/>
</dbReference>
<dbReference type="InterPro" id="IPR027503">
    <property type="entry name" value="Lonm_euk"/>
</dbReference>
<dbReference type="InterPro" id="IPR027417">
    <property type="entry name" value="P-loop_NTPase"/>
</dbReference>
<dbReference type="InterPro" id="IPR008268">
    <property type="entry name" value="Peptidase_S16_AS"/>
</dbReference>
<dbReference type="InterPro" id="IPR015947">
    <property type="entry name" value="PUA-like_sf"/>
</dbReference>
<dbReference type="InterPro" id="IPR020568">
    <property type="entry name" value="Ribosomal_Su5_D2-typ_SF"/>
</dbReference>
<dbReference type="InterPro" id="IPR014721">
    <property type="entry name" value="Ribsml_uS5_D2-typ_fold_subgr"/>
</dbReference>
<dbReference type="NCBIfam" id="TIGR00763">
    <property type="entry name" value="lon"/>
    <property type="match status" value="1"/>
</dbReference>
<dbReference type="PANTHER" id="PTHR43718">
    <property type="entry name" value="LON PROTEASE"/>
    <property type="match status" value="1"/>
</dbReference>
<dbReference type="PANTHER" id="PTHR43718:SF2">
    <property type="entry name" value="LON PROTEASE HOMOLOG, MITOCHONDRIAL"/>
    <property type="match status" value="1"/>
</dbReference>
<dbReference type="Pfam" id="PF00004">
    <property type="entry name" value="AAA"/>
    <property type="match status" value="1"/>
</dbReference>
<dbReference type="Pfam" id="PF05362">
    <property type="entry name" value="Lon_C"/>
    <property type="match status" value="1"/>
</dbReference>
<dbReference type="Pfam" id="PF22667">
    <property type="entry name" value="Lon_lid"/>
    <property type="match status" value="1"/>
</dbReference>
<dbReference type="Pfam" id="PF02190">
    <property type="entry name" value="LON_substr_bdg"/>
    <property type="match status" value="1"/>
</dbReference>
<dbReference type="PRINTS" id="PR00830">
    <property type="entry name" value="ENDOLAPTASE"/>
</dbReference>
<dbReference type="SMART" id="SM00382">
    <property type="entry name" value="AAA"/>
    <property type="match status" value="1"/>
</dbReference>
<dbReference type="SMART" id="SM00464">
    <property type="entry name" value="LON"/>
    <property type="match status" value="1"/>
</dbReference>
<dbReference type="SUPFAM" id="SSF52540">
    <property type="entry name" value="P-loop containing nucleoside triphosphate hydrolases"/>
    <property type="match status" value="1"/>
</dbReference>
<dbReference type="SUPFAM" id="SSF88697">
    <property type="entry name" value="PUA domain-like"/>
    <property type="match status" value="1"/>
</dbReference>
<dbReference type="SUPFAM" id="SSF54211">
    <property type="entry name" value="Ribosomal protein S5 domain 2-like"/>
    <property type="match status" value="1"/>
</dbReference>
<dbReference type="PROSITE" id="PS51787">
    <property type="entry name" value="LON_N"/>
    <property type="match status" value="1"/>
</dbReference>
<dbReference type="PROSITE" id="PS51786">
    <property type="entry name" value="LON_PROTEOLYTIC"/>
    <property type="match status" value="1"/>
</dbReference>
<dbReference type="PROSITE" id="PS01046">
    <property type="entry name" value="LON_SER"/>
    <property type="match status" value="1"/>
</dbReference>
<accession>A8XFM8</accession>